<keyword id="KW-1185">Reference proteome</keyword>
<keyword id="KW-0687">Ribonucleoprotein</keyword>
<keyword id="KW-0689">Ribosomal protein</keyword>
<keyword id="KW-0694">RNA-binding</keyword>
<keyword id="KW-0699">rRNA-binding</keyword>
<evidence type="ECO:0000255" key="1">
    <source>
        <dbReference type="HAMAP-Rule" id="MF_01337"/>
    </source>
</evidence>
<evidence type="ECO:0000305" key="2"/>
<protein>
    <recommendedName>
        <fullName evidence="1">Large ribosomal subunit protein uL18</fullName>
    </recommendedName>
    <alternativeName>
        <fullName evidence="2">50S ribosomal protein L18</fullName>
    </alternativeName>
</protein>
<feature type="chain" id="PRO_0000131338" description="Large ribosomal subunit protein uL18">
    <location>
        <begin position="1"/>
        <end position="116"/>
    </location>
</feature>
<reference key="1">
    <citation type="journal article" date="2002" name="Nat. Biotechnol.">
        <title>Genome sequence of the dissimilatory metal ion-reducing bacterium Shewanella oneidensis.</title>
        <authorList>
            <person name="Heidelberg J.F."/>
            <person name="Paulsen I.T."/>
            <person name="Nelson K.E."/>
            <person name="Gaidos E.J."/>
            <person name="Nelson W.C."/>
            <person name="Read T.D."/>
            <person name="Eisen J.A."/>
            <person name="Seshadri R."/>
            <person name="Ward N.L."/>
            <person name="Methe B.A."/>
            <person name="Clayton R.A."/>
            <person name="Meyer T."/>
            <person name="Tsapin A."/>
            <person name="Scott J."/>
            <person name="Beanan M.J."/>
            <person name="Brinkac L.M."/>
            <person name="Daugherty S.C."/>
            <person name="DeBoy R.T."/>
            <person name="Dodson R.J."/>
            <person name="Durkin A.S."/>
            <person name="Haft D.H."/>
            <person name="Kolonay J.F."/>
            <person name="Madupu R."/>
            <person name="Peterson J.D."/>
            <person name="Umayam L.A."/>
            <person name="White O."/>
            <person name="Wolf A.M."/>
            <person name="Vamathevan J.J."/>
            <person name="Weidman J.F."/>
            <person name="Impraim M."/>
            <person name="Lee K."/>
            <person name="Berry K.J."/>
            <person name="Lee C."/>
            <person name="Mueller J."/>
            <person name="Khouri H.M."/>
            <person name="Gill J."/>
            <person name="Utterback T.R."/>
            <person name="McDonald L.A."/>
            <person name="Feldblyum T.V."/>
            <person name="Smith H.O."/>
            <person name="Venter J.C."/>
            <person name="Nealson K.H."/>
            <person name="Fraser C.M."/>
        </authorList>
    </citation>
    <scope>NUCLEOTIDE SEQUENCE [LARGE SCALE GENOMIC DNA]</scope>
    <source>
        <strain>ATCC 700550 / JCM 31522 / CIP 106686 / LMG 19005 / NCIMB 14063 / MR-1</strain>
    </source>
</reference>
<name>RL18_SHEON</name>
<gene>
    <name evidence="1" type="primary">rplR</name>
    <name type="ordered locus">SO_0247</name>
</gene>
<dbReference type="EMBL" id="AE014299">
    <property type="protein sequence ID" value="AAN53332.1"/>
    <property type="molecule type" value="Genomic_DNA"/>
</dbReference>
<dbReference type="RefSeq" id="NP_715887.1">
    <property type="nucleotide sequence ID" value="NC_004347.2"/>
</dbReference>
<dbReference type="RefSeq" id="WP_011070627.1">
    <property type="nucleotide sequence ID" value="NZ_CP053946.1"/>
</dbReference>
<dbReference type="SMR" id="Q8EK53"/>
<dbReference type="STRING" id="211586.SO_0247"/>
<dbReference type="PaxDb" id="211586-SO_0247"/>
<dbReference type="KEGG" id="son:SO_0247"/>
<dbReference type="PATRIC" id="fig|211586.12.peg.235"/>
<dbReference type="eggNOG" id="COG0256">
    <property type="taxonomic scope" value="Bacteria"/>
</dbReference>
<dbReference type="HOGENOM" id="CLU_098841_0_1_6"/>
<dbReference type="OrthoDB" id="9810939at2"/>
<dbReference type="PhylomeDB" id="Q8EK53"/>
<dbReference type="BioCyc" id="SONE211586:G1GMP-236-MONOMER"/>
<dbReference type="Proteomes" id="UP000008186">
    <property type="component" value="Chromosome"/>
</dbReference>
<dbReference type="GO" id="GO:0022625">
    <property type="term" value="C:cytosolic large ribosomal subunit"/>
    <property type="evidence" value="ECO:0000318"/>
    <property type="project" value="GO_Central"/>
</dbReference>
<dbReference type="GO" id="GO:0008097">
    <property type="term" value="F:5S rRNA binding"/>
    <property type="evidence" value="ECO:0000318"/>
    <property type="project" value="GO_Central"/>
</dbReference>
<dbReference type="GO" id="GO:0003735">
    <property type="term" value="F:structural constituent of ribosome"/>
    <property type="evidence" value="ECO:0007669"/>
    <property type="project" value="InterPro"/>
</dbReference>
<dbReference type="GO" id="GO:0006412">
    <property type="term" value="P:translation"/>
    <property type="evidence" value="ECO:0007669"/>
    <property type="project" value="UniProtKB-UniRule"/>
</dbReference>
<dbReference type="CDD" id="cd00432">
    <property type="entry name" value="Ribosomal_L18_L5e"/>
    <property type="match status" value="1"/>
</dbReference>
<dbReference type="FunFam" id="3.30.420.100:FF:000001">
    <property type="entry name" value="50S ribosomal protein L18"/>
    <property type="match status" value="1"/>
</dbReference>
<dbReference type="Gene3D" id="3.30.420.100">
    <property type="match status" value="1"/>
</dbReference>
<dbReference type="HAMAP" id="MF_01337_B">
    <property type="entry name" value="Ribosomal_uL18_B"/>
    <property type="match status" value="1"/>
</dbReference>
<dbReference type="InterPro" id="IPR004389">
    <property type="entry name" value="Ribosomal_uL18_bac-type"/>
</dbReference>
<dbReference type="InterPro" id="IPR005484">
    <property type="entry name" value="Ribosomal_uL18_bac/euk"/>
</dbReference>
<dbReference type="NCBIfam" id="TIGR00060">
    <property type="entry name" value="L18_bact"/>
    <property type="match status" value="1"/>
</dbReference>
<dbReference type="PANTHER" id="PTHR12899">
    <property type="entry name" value="39S RIBOSOMAL PROTEIN L18, MITOCHONDRIAL"/>
    <property type="match status" value="1"/>
</dbReference>
<dbReference type="PANTHER" id="PTHR12899:SF3">
    <property type="entry name" value="LARGE RIBOSOMAL SUBUNIT PROTEIN UL18M"/>
    <property type="match status" value="1"/>
</dbReference>
<dbReference type="Pfam" id="PF00861">
    <property type="entry name" value="Ribosomal_L18p"/>
    <property type="match status" value="1"/>
</dbReference>
<dbReference type="SUPFAM" id="SSF53137">
    <property type="entry name" value="Translational machinery components"/>
    <property type="match status" value="1"/>
</dbReference>
<proteinExistence type="inferred from homology"/>
<sequence>MDKKTSRLRRAIRARKKIQELGVNRLVVHRTPRHIYAQVINPEAQVVAAASTVEKAVKEQLKSTGNVDAAKAVGKFVAERAIEKGVTNVAFDRSGFKYHGRVAALADAAREAGLQF</sequence>
<comment type="function">
    <text evidence="1">This is one of the proteins that bind and probably mediate the attachment of the 5S RNA into the large ribosomal subunit, where it forms part of the central protuberance.</text>
</comment>
<comment type="subunit">
    <text evidence="1">Part of the 50S ribosomal subunit; part of the 5S rRNA/L5/L18/L25 subcomplex. Contacts the 5S and 23S rRNAs.</text>
</comment>
<comment type="similarity">
    <text evidence="1">Belongs to the universal ribosomal protein uL18 family.</text>
</comment>
<organism>
    <name type="scientific">Shewanella oneidensis (strain ATCC 700550 / JCM 31522 / CIP 106686 / LMG 19005 / NCIMB 14063 / MR-1)</name>
    <dbReference type="NCBI Taxonomy" id="211586"/>
    <lineage>
        <taxon>Bacteria</taxon>
        <taxon>Pseudomonadati</taxon>
        <taxon>Pseudomonadota</taxon>
        <taxon>Gammaproteobacteria</taxon>
        <taxon>Alteromonadales</taxon>
        <taxon>Shewanellaceae</taxon>
        <taxon>Shewanella</taxon>
    </lineage>
</organism>
<accession>Q8EK53</accession>